<evidence type="ECO:0000255" key="1">
    <source>
        <dbReference type="HAMAP-Rule" id="MF_03059"/>
    </source>
</evidence>
<feature type="chain" id="PRO_0000385622" description="Ribosome-releasing factor 2, mitochondrial">
    <location>
        <begin position="1"/>
        <end position="799"/>
    </location>
</feature>
<feature type="domain" description="tr-type G">
    <location>
        <begin position="19"/>
        <end position="306"/>
    </location>
</feature>
<feature type="binding site" evidence="1">
    <location>
        <begin position="28"/>
        <end position="35"/>
    </location>
    <ligand>
        <name>GTP</name>
        <dbReference type="ChEBI" id="CHEBI:37565"/>
    </ligand>
</feature>
<feature type="binding site" evidence="1">
    <location>
        <begin position="93"/>
        <end position="97"/>
    </location>
    <ligand>
        <name>GTP</name>
        <dbReference type="ChEBI" id="CHEBI:37565"/>
    </ligand>
</feature>
<feature type="binding site" evidence="1">
    <location>
        <begin position="145"/>
        <end position="148"/>
    </location>
    <ligand>
        <name>GTP</name>
        <dbReference type="ChEBI" id="CHEBI:37565"/>
    </ligand>
</feature>
<protein>
    <recommendedName>
        <fullName evidence="1">Ribosome-releasing factor 2, mitochondrial</fullName>
        <shortName evidence="1">RRF2mt</shortName>
    </recommendedName>
    <alternativeName>
        <fullName evidence="1">Elongation factor G 2, mitochondrial</fullName>
        <shortName evidence="1">EF-G2mt</shortName>
        <shortName evidence="1">mEF-G 2</shortName>
    </alternativeName>
</protein>
<gene>
    <name evidence="1" type="primary">MEF2</name>
    <name type="ORF">Kpol_463p13</name>
</gene>
<comment type="function">
    <text evidence="1">Mitochondrial GTPase that mediates the disassembly of ribosomes from messenger RNA at the termination of mitochondrial protein biosynthesis. Not involved in the GTP-dependent ribosomal translocation step during translation elongation.</text>
</comment>
<comment type="subcellular location">
    <subcellularLocation>
        <location evidence="1">Mitochondrion</location>
    </subcellularLocation>
</comment>
<comment type="miscellaneous">
    <text evidence="1">This protein may be expected to contain an N-terminal transit peptide but none has been predicted.</text>
</comment>
<comment type="similarity">
    <text evidence="1">Belongs to the TRAFAC class translation factor GTPase superfamily. Classic translation factor GTPase family. EF-G/EF-2 subfamily.</text>
</comment>
<name>RRF2M_VANPO</name>
<accession>A7TQJ9</accession>
<keyword id="KW-0342">GTP-binding</keyword>
<keyword id="KW-0496">Mitochondrion</keyword>
<keyword id="KW-0547">Nucleotide-binding</keyword>
<keyword id="KW-0648">Protein biosynthesis</keyword>
<keyword id="KW-1185">Reference proteome</keyword>
<proteinExistence type="inferred from homology"/>
<sequence>MFGFGIRQLRGYASKTDLSKIRNIGIIAHIDAGKTTTTERMLYYSGKTNRIGNVDQGDTVTDYLPQERSRGITIQSAAISFNWQNDHRINLIDTPGHVDFTFEVIKSLKVLDGCVTILDAVAGVEAQTEKVWKQSYGIPKICYINKMDRVGSGYSRTVKELMIKMNQRVVLANMPLFKLDPVTNEQVFEGVLDVVNMKALRWDSTDVNKVDIADIDKFDSSLLDELTKAREAMVETLSEFDENLVEHFLEDAEGDYLKVSPTILNSSIRKSTLSQDITPILCGSSFRNIGVQPLLDAVVNYLPSPLEAKFPELNEDIPISYDKRKGLLFDNNSEICVAFAFKVITDEIRGQLVFVRVYSGTLKNGHSVYNSTNGKTFKINKPVIMHANKTEDVQSLSAGEIGVLTGSTVFGRIETGDTLISHSMVKDGLKSIERKGNLNLKINPIIIPPPVFSVYIEPKTLGNRKAMEAALKILVTEDPSLHVSQDEETSQTLLSGMGELHLEIARDKLLNDLKAEVGIGKLMISYKETINSTTNPVIYQDDIGYKFTIQIEPLEGEEVRVDKDTATEAWYPLGVDNNYLIFEKSNKPGLGAVWKHQIPYDVVINTIKSSCLASFQRGGKIGGYALHSCAVRIKGDFEVPYDATSSNEILNITRKLIIKSLQALHESSYSLLEPIMDVEIVVNQKFMGEVIQDLTGHHKANILSIEDEHGLDYNNERSTLNFKDIVDSQYLPPDITLNLAKLDNGGDRCKVIKAEAPLKEMVSYSNKLRSLTEGRGMVYMNYHGMKKVTPERLDDVLQG</sequence>
<dbReference type="EMBL" id="DS480459">
    <property type="protein sequence ID" value="EDO15463.1"/>
    <property type="molecule type" value="Genomic_DNA"/>
</dbReference>
<dbReference type="RefSeq" id="XP_001643321.1">
    <property type="nucleotide sequence ID" value="XM_001643271.1"/>
</dbReference>
<dbReference type="SMR" id="A7TQJ9"/>
<dbReference type="FunCoup" id="A7TQJ9">
    <property type="interactions" value="624"/>
</dbReference>
<dbReference type="STRING" id="436907.A7TQJ9"/>
<dbReference type="GeneID" id="5543532"/>
<dbReference type="KEGG" id="vpo:Kpol_463p13"/>
<dbReference type="eggNOG" id="KOG0465">
    <property type="taxonomic scope" value="Eukaryota"/>
</dbReference>
<dbReference type="HOGENOM" id="CLU_002794_4_1_1"/>
<dbReference type="InParanoid" id="A7TQJ9"/>
<dbReference type="OMA" id="GPQFTFP"/>
<dbReference type="OrthoDB" id="198619at2759"/>
<dbReference type="Proteomes" id="UP000000267">
    <property type="component" value="Unassembled WGS sequence"/>
</dbReference>
<dbReference type="GO" id="GO:0005739">
    <property type="term" value="C:mitochondrion"/>
    <property type="evidence" value="ECO:0007669"/>
    <property type="project" value="UniProtKB-SubCell"/>
</dbReference>
<dbReference type="GO" id="GO:0005525">
    <property type="term" value="F:GTP binding"/>
    <property type="evidence" value="ECO:0007669"/>
    <property type="project" value="UniProtKB-UniRule"/>
</dbReference>
<dbReference type="GO" id="GO:0003924">
    <property type="term" value="F:GTPase activity"/>
    <property type="evidence" value="ECO:0007669"/>
    <property type="project" value="UniProtKB-UniRule"/>
</dbReference>
<dbReference type="GO" id="GO:0032543">
    <property type="term" value="P:mitochondrial translation"/>
    <property type="evidence" value="ECO:0007669"/>
    <property type="project" value="UniProtKB-UniRule"/>
</dbReference>
<dbReference type="GO" id="GO:0032790">
    <property type="term" value="P:ribosome disassembly"/>
    <property type="evidence" value="ECO:0007669"/>
    <property type="project" value="UniProtKB-UniRule"/>
</dbReference>
<dbReference type="CDD" id="cd01886">
    <property type="entry name" value="EF-G"/>
    <property type="match status" value="1"/>
</dbReference>
<dbReference type="CDD" id="cd16262">
    <property type="entry name" value="EFG_III"/>
    <property type="match status" value="1"/>
</dbReference>
<dbReference type="CDD" id="cd03713">
    <property type="entry name" value="EFG_mtEFG_C"/>
    <property type="match status" value="1"/>
</dbReference>
<dbReference type="CDD" id="cd04092">
    <property type="entry name" value="mtEFG2_II_like"/>
    <property type="match status" value="1"/>
</dbReference>
<dbReference type="FunFam" id="3.40.50.300:FF:001636">
    <property type="entry name" value="Ribosome-releasing factor 2, mitochondrial"/>
    <property type="match status" value="1"/>
</dbReference>
<dbReference type="Gene3D" id="3.30.70.240">
    <property type="match status" value="1"/>
</dbReference>
<dbReference type="Gene3D" id="3.30.70.870">
    <property type="entry name" value="Elongation Factor G (Translational Gtpase), domain 3"/>
    <property type="match status" value="1"/>
</dbReference>
<dbReference type="Gene3D" id="3.40.50.300">
    <property type="entry name" value="P-loop containing nucleotide triphosphate hydrolases"/>
    <property type="match status" value="1"/>
</dbReference>
<dbReference type="Gene3D" id="2.40.30.10">
    <property type="entry name" value="Translation factors"/>
    <property type="match status" value="1"/>
</dbReference>
<dbReference type="HAMAP" id="MF_03059">
    <property type="entry name" value="mEF_G_2"/>
    <property type="match status" value="1"/>
</dbReference>
<dbReference type="InterPro" id="IPR053905">
    <property type="entry name" value="EF-G-like_DII"/>
</dbReference>
<dbReference type="InterPro" id="IPR030851">
    <property type="entry name" value="EFG2"/>
</dbReference>
<dbReference type="InterPro" id="IPR041095">
    <property type="entry name" value="EFG_II"/>
</dbReference>
<dbReference type="InterPro" id="IPR009022">
    <property type="entry name" value="EFG_III"/>
</dbReference>
<dbReference type="InterPro" id="IPR035647">
    <property type="entry name" value="EFG_III/V"/>
</dbReference>
<dbReference type="InterPro" id="IPR035649">
    <property type="entry name" value="EFG_V"/>
</dbReference>
<dbReference type="InterPro" id="IPR000640">
    <property type="entry name" value="EFG_V-like"/>
</dbReference>
<dbReference type="InterPro" id="IPR031157">
    <property type="entry name" value="G_TR_CS"/>
</dbReference>
<dbReference type="InterPro" id="IPR027417">
    <property type="entry name" value="P-loop_NTPase"/>
</dbReference>
<dbReference type="InterPro" id="IPR005225">
    <property type="entry name" value="Small_GTP-bd"/>
</dbReference>
<dbReference type="InterPro" id="IPR000795">
    <property type="entry name" value="T_Tr_GTP-bd_dom"/>
</dbReference>
<dbReference type="InterPro" id="IPR009000">
    <property type="entry name" value="Transl_B-barrel_sf"/>
</dbReference>
<dbReference type="NCBIfam" id="TIGR00231">
    <property type="entry name" value="small_GTP"/>
    <property type="match status" value="1"/>
</dbReference>
<dbReference type="PANTHER" id="PTHR43261:SF1">
    <property type="entry name" value="RIBOSOME-RELEASING FACTOR 2, MITOCHONDRIAL"/>
    <property type="match status" value="1"/>
</dbReference>
<dbReference type="PANTHER" id="PTHR43261">
    <property type="entry name" value="TRANSLATION ELONGATION FACTOR G-RELATED"/>
    <property type="match status" value="1"/>
</dbReference>
<dbReference type="Pfam" id="PF22042">
    <property type="entry name" value="EF-G_D2"/>
    <property type="match status" value="1"/>
</dbReference>
<dbReference type="Pfam" id="PF00679">
    <property type="entry name" value="EFG_C"/>
    <property type="match status" value="1"/>
</dbReference>
<dbReference type="Pfam" id="PF14492">
    <property type="entry name" value="EFG_III"/>
    <property type="match status" value="1"/>
</dbReference>
<dbReference type="Pfam" id="PF00009">
    <property type="entry name" value="GTP_EFTU"/>
    <property type="match status" value="1"/>
</dbReference>
<dbReference type="PRINTS" id="PR00315">
    <property type="entry name" value="ELONGATNFCT"/>
</dbReference>
<dbReference type="SMART" id="SM00838">
    <property type="entry name" value="EFG_C"/>
    <property type="match status" value="1"/>
</dbReference>
<dbReference type="SUPFAM" id="SSF54980">
    <property type="entry name" value="EF-G C-terminal domain-like"/>
    <property type="match status" value="2"/>
</dbReference>
<dbReference type="SUPFAM" id="SSF52540">
    <property type="entry name" value="P-loop containing nucleoside triphosphate hydrolases"/>
    <property type="match status" value="1"/>
</dbReference>
<dbReference type="SUPFAM" id="SSF50447">
    <property type="entry name" value="Translation proteins"/>
    <property type="match status" value="1"/>
</dbReference>
<dbReference type="PROSITE" id="PS00301">
    <property type="entry name" value="G_TR_1"/>
    <property type="match status" value="1"/>
</dbReference>
<dbReference type="PROSITE" id="PS51722">
    <property type="entry name" value="G_TR_2"/>
    <property type="match status" value="1"/>
</dbReference>
<reference key="1">
    <citation type="journal article" date="2007" name="Proc. Natl. Acad. Sci. U.S.A.">
        <title>Independent sorting-out of thousands of duplicated gene pairs in two yeast species descended from a whole-genome duplication.</title>
        <authorList>
            <person name="Scannell D.R."/>
            <person name="Frank A.C."/>
            <person name="Conant G.C."/>
            <person name="Byrne K.P."/>
            <person name="Woolfit M."/>
            <person name="Wolfe K.H."/>
        </authorList>
    </citation>
    <scope>NUCLEOTIDE SEQUENCE [LARGE SCALE GENOMIC DNA]</scope>
    <source>
        <strain>ATCC 22028 / DSM 70294 / BCRC 21397 / CBS 2163 / NBRC 10782 / NRRL Y-8283 / UCD 57-17</strain>
    </source>
</reference>
<organism>
    <name type="scientific">Vanderwaltozyma polyspora (strain ATCC 22028 / DSM 70294 / BCRC 21397 / CBS 2163 / NBRC 10782 / NRRL Y-8283 / UCD 57-17)</name>
    <name type="common">Kluyveromyces polysporus</name>
    <dbReference type="NCBI Taxonomy" id="436907"/>
    <lineage>
        <taxon>Eukaryota</taxon>
        <taxon>Fungi</taxon>
        <taxon>Dikarya</taxon>
        <taxon>Ascomycota</taxon>
        <taxon>Saccharomycotina</taxon>
        <taxon>Saccharomycetes</taxon>
        <taxon>Saccharomycetales</taxon>
        <taxon>Saccharomycetaceae</taxon>
        <taxon>Vanderwaltozyma</taxon>
    </lineage>
</organism>